<organism>
    <name type="scientific">Homo sapiens</name>
    <name type="common">Human</name>
    <dbReference type="NCBI Taxonomy" id="9606"/>
    <lineage>
        <taxon>Eukaryota</taxon>
        <taxon>Metazoa</taxon>
        <taxon>Chordata</taxon>
        <taxon>Craniata</taxon>
        <taxon>Vertebrata</taxon>
        <taxon>Euteleostomi</taxon>
        <taxon>Mammalia</taxon>
        <taxon>Eutheria</taxon>
        <taxon>Euarchontoglires</taxon>
        <taxon>Primates</taxon>
        <taxon>Haplorrhini</taxon>
        <taxon>Catarrhini</taxon>
        <taxon>Hominidae</taxon>
        <taxon>Homo</taxon>
    </lineage>
</organism>
<accession>Q5H9M0</accession>
<accession>D3DUX2</accession>
<accession>Q49AS5</accession>
<accession>Q8N2C0</accession>
<accession>Q96MT6</accession>
<proteinExistence type="evidence at protein level"/>
<sequence>MESEYVLCNWKDQLWPAKVLSRSETSSNSKRKKAFSLEVQILSLDEKIKLDSTETKILNKSQIEAIAASLGLQSEDSAPPTEETAYGRSLKVALGILNERTNLSQASTSDEEEITMLSQNVPQKQSDSPPHKKYRKDEGDLPGCLEERENSACLLASSESDDSLYDDKSQAPTMVDTIPSEVETKSLQNSSWCETFPSLSEDNDEKENKNKIDISAVMSVHSAVKEESACVKDEKFAPPLSPLSSDMLIMPKALKEESEDTCLETLAVPSECSAFSENIEDPGEGPSNPCLDTSQNQPSMESEMGAAACPGSCSRECEVSFSASNPVWDYSHLMSSERNFQRLDFEELEEEGQASDKSLLPSRINLSLLDDDEEDEELPRFILHYETHPFETGMIVWFKYQKYPFWPAVIKSIRRKERKASVLFVEANMNSEKKGIRVNFRRLKKFDCKEKQMLVDKAREDYSESIDWCISLICDYRVRIGCGSFTGSLLEYYAADISYPVRKETKQDTFRNKFPKLHNEDAREPMAVTSQTKKMSFQKILPDRMKAARDRANKNLVDFIVNAKGTENHLLAIVNGTKGSRWLKSFLNANRFTPCIETYFEDEDQLDEVVKYLQEVCNQIDQIMPTWIKDDKIKFILEVLLPEAIICSISAVDGLDYEAAEAKYLKGPCLGYRERELFDAKIIYEKRRKAPTNEAH</sequence>
<keyword id="KW-0597">Phosphoprotein</keyword>
<keyword id="KW-1267">Proteomics identification</keyword>
<keyword id="KW-1185">Reference proteome</keyword>
<protein>
    <recommendedName>
        <fullName evidence="3">PWWP domain-containing DNA repair factor 3B</fullName>
        <shortName evidence="3">PWWP3B</shortName>
    </recommendedName>
    <alternativeName>
        <fullName>Mutated melanoma-associated antigen 1-like protein 1</fullName>
        <shortName>MUM1-like protein 1</shortName>
    </alternativeName>
    <alternativeName>
        <fullName>PWWP domain-containing protein MUM1L1</fullName>
    </alternativeName>
</protein>
<feature type="chain" id="PRO_0000257832" description="PWWP domain-containing DNA repair factor 3B">
    <location>
        <begin position="1"/>
        <end position="696"/>
    </location>
</feature>
<feature type="domain" description="PWWP">
    <location>
        <begin position="392"/>
        <end position="453"/>
    </location>
</feature>
<feature type="region of interest" description="Disordered" evidence="2">
    <location>
        <begin position="119"/>
        <end position="143"/>
    </location>
</feature>
<feature type="region of interest" description="Disordered" evidence="2">
    <location>
        <begin position="278"/>
        <end position="303"/>
    </location>
</feature>
<feature type="compositionally biased region" description="Polar residues" evidence="2">
    <location>
        <begin position="119"/>
        <end position="128"/>
    </location>
</feature>
<feature type="compositionally biased region" description="Polar residues" evidence="2">
    <location>
        <begin position="290"/>
        <end position="300"/>
    </location>
</feature>
<feature type="modified residue" description="Phosphoserine" evidence="1">
    <location>
        <position position="128"/>
    </location>
</feature>
<feature type="sequence variant" id="VAR_057776" description="In dbSNP:rs12392298.">
    <original>G</original>
    <variation>D</variation>
    <location>
        <position position="95"/>
    </location>
</feature>
<feature type="sequence conflict" description="In Ref. 1; BAB71194." evidence="3" ref="1">
    <original>N</original>
    <variation>D</variation>
    <location>
        <position position="9"/>
    </location>
</feature>
<feature type="sequence conflict" description="In Ref. 1; BAC03529." evidence="3" ref="1">
    <original>N</original>
    <variation>D</variation>
    <location>
        <position position="296"/>
    </location>
</feature>
<name>PWP3B_HUMAN</name>
<comment type="similarity">
    <text evidence="3">Belongs to the PWWP3A family.</text>
</comment>
<comment type="sequence caution" evidence="3">
    <conflict type="frameshift">
        <sequence resource="EMBL-CDS" id="AAH31229"/>
    </conflict>
</comment>
<comment type="sequence caution" evidence="3">
    <conflict type="erroneous termination">
        <sequence resource="EMBL-CDS" id="BAB71194"/>
    </conflict>
    <text>Truncated C-terminus.</text>
</comment>
<evidence type="ECO:0000250" key="1">
    <source>
        <dbReference type="UniProtKB" id="Q4VA55"/>
    </source>
</evidence>
<evidence type="ECO:0000256" key="2">
    <source>
        <dbReference type="SAM" id="MobiDB-lite"/>
    </source>
</evidence>
<evidence type="ECO:0000305" key="3"/>
<evidence type="ECO:0000312" key="4">
    <source>
        <dbReference type="HGNC" id="HGNC:26583"/>
    </source>
</evidence>
<gene>
    <name evidence="4" type="primary">PWWP3B</name>
    <name evidence="4" type="synonym">MUM1L1</name>
</gene>
<dbReference type="EMBL" id="AK056478">
    <property type="protein sequence ID" value="BAB71194.1"/>
    <property type="status" value="ALT_SEQ"/>
    <property type="molecule type" value="mRNA"/>
</dbReference>
<dbReference type="EMBL" id="AK090835">
    <property type="protein sequence ID" value="BAC03529.1"/>
    <property type="molecule type" value="mRNA"/>
</dbReference>
<dbReference type="EMBL" id="Z68289">
    <property type="status" value="NOT_ANNOTATED_CDS"/>
    <property type="molecule type" value="Genomic_DNA"/>
</dbReference>
<dbReference type="EMBL" id="CH471120">
    <property type="protein sequence ID" value="EAX02743.1"/>
    <property type="molecule type" value="Genomic_DNA"/>
</dbReference>
<dbReference type="EMBL" id="CH471120">
    <property type="protein sequence ID" value="EAX02744.1"/>
    <property type="molecule type" value="Genomic_DNA"/>
</dbReference>
<dbReference type="EMBL" id="BC031229">
    <property type="protein sequence ID" value="AAH31229.1"/>
    <property type="status" value="ALT_FRAME"/>
    <property type="molecule type" value="mRNA"/>
</dbReference>
<dbReference type="CCDS" id="CCDS55469.1"/>
<dbReference type="RefSeq" id="NP_001164491.1">
    <property type="nucleotide sequence ID" value="NM_001171020.2"/>
</dbReference>
<dbReference type="RefSeq" id="NP_689636.3">
    <property type="nucleotide sequence ID" value="NM_152423.4"/>
</dbReference>
<dbReference type="RefSeq" id="XP_005262134.1">
    <property type="nucleotide sequence ID" value="XM_005262077.2"/>
</dbReference>
<dbReference type="RefSeq" id="XP_011529158.1">
    <property type="nucleotide sequence ID" value="XM_011530856.2"/>
</dbReference>
<dbReference type="RefSeq" id="XP_011529159.1">
    <property type="nucleotide sequence ID" value="XM_011530857.2"/>
</dbReference>
<dbReference type="RefSeq" id="XP_016884758.1">
    <property type="nucleotide sequence ID" value="XM_017029269.2"/>
</dbReference>
<dbReference type="RefSeq" id="XP_024308102.1">
    <property type="nucleotide sequence ID" value="XM_024452334.2"/>
</dbReference>
<dbReference type="RefSeq" id="XP_047297778.1">
    <property type="nucleotide sequence ID" value="XM_047441822.1"/>
</dbReference>
<dbReference type="RefSeq" id="XP_047297779.1">
    <property type="nucleotide sequence ID" value="XM_047441823.1"/>
</dbReference>
<dbReference type="RefSeq" id="XP_047297780.1">
    <property type="nucleotide sequence ID" value="XM_047441824.1"/>
</dbReference>
<dbReference type="RefSeq" id="XP_047297781.1">
    <property type="nucleotide sequence ID" value="XM_047441825.1"/>
</dbReference>
<dbReference type="RefSeq" id="XP_054182435.1">
    <property type="nucleotide sequence ID" value="XM_054326460.1"/>
</dbReference>
<dbReference type="RefSeq" id="XP_054182436.1">
    <property type="nucleotide sequence ID" value="XM_054326461.1"/>
</dbReference>
<dbReference type="RefSeq" id="XP_054182437.1">
    <property type="nucleotide sequence ID" value="XM_054326462.1"/>
</dbReference>
<dbReference type="RefSeq" id="XP_054182438.1">
    <property type="nucleotide sequence ID" value="XM_054326463.1"/>
</dbReference>
<dbReference type="RefSeq" id="XP_054182439.1">
    <property type="nucleotide sequence ID" value="XM_054326464.1"/>
</dbReference>
<dbReference type="RefSeq" id="XP_054182440.1">
    <property type="nucleotide sequence ID" value="XM_054326465.1"/>
</dbReference>
<dbReference type="RefSeq" id="XP_054182441.1">
    <property type="nucleotide sequence ID" value="XM_054326466.1"/>
</dbReference>
<dbReference type="SMR" id="Q5H9M0"/>
<dbReference type="BioGRID" id="126552">
    <property type="interactions" value="6"/>
</dbReference>
<dbReference type="FunCoup" id="Q5H9M0">
    <property type="interactions" value="16"/>
</dbReference>
<dbReference type="IntAct" id="Q5H9M0">
    <property type="interactions" value="1"/>
</dbReference>
<dbReference type="STRING" id="9606.ENSP00000338641"/>
<dbReference type="GlyGen" id="Q5H9M0">
    <property type="glycosylation" value="1 site, 1 O-linked glycan (1 site)"/>
</dbReference>
<dbReference type="iPTMnet" id="Q5H9M0"/>
<dbReference type="PhosphoSitePlus" id="Q5H9M0"/>
<dbReference type="BioMuta" id="MUM1L1"/>
<dbReference type="DMDM" id="74762184"/>
<dbReference type="jPOST" id="Q5H9M0"/>
<dbReference type="MassIVE" id="Q5H9M0"/>
<dbReference type="PaxDb" id="9606-ENSP00000338641"/>
<dbReference type="PeptideAtlas" id="Q5H9M0"/>
<dbReference type="ProteomicsDB" id="62899"/>
<dbReference type="Antibodypedia" id="427">
    <property type="antibodies" value="81 antibodies from 19 providers"/>
</dbReference>
<dbReference type="DNASU" id="139221"/>
<dbReference type="Ensembl" id="ENST00000337685.6">
    <property type="protein sequence ID" value="ENSP00000338641.2"/>
    <property type="gene ID" value="ENSG00000157502.13"/>
</dbReference>
<dbReference type="Ensembl" id="ENST00000357175.6">
    <property type="protein sequence ID" value="ENSP00000349699.2"/>
    <property type="gene ID" value="ENSG00000157502.13"/>
</dbReference>
<dbReference type="Ensembl" id="ENST00000372552.1">
    <property type="protein sequence ID" value="ENSP00000361632.1"/>
    <property type="gene ID" value="ENSG00000157502.13"/>
</dbReference>
<dbReference type="GeneID" id="139221"/>
<dbReference type="KEGG" id="hsa:139221"/>
<dbReference type="MANE-Select" id="ENST00000357175.6">
    <property type="protein sequence ID" value="ENSP00000349699.2"/>
    <property type="RefSeq nucleotide sequence ID" value="NM_001171020.2"/>
    <property type="RefSeq protein sequence ID" value="NP_001164491.1"/>
</dbReference>
<dbReference type="UCSC" id="uc004emf.2">
    <property type="organism name" value="human"/>
</dbReference>
<dbReference type="AGR" id="HGNC:26583"/>
<dbReference type="CTD" id="139221"/>
<dbReference type="DisGeNET" id="139221"/>
<dbReference type="GeneCards" id="PWWP3B"/>
<dbReference type="HGNC" id="HGNC:26583">
    <property type="gene designation" value="PWWP3B"/>
</dbReference>
<dbReference type="HPA" id="ENSG00000157502">
    <property type="expression patterns" value="Tissue enhanced (ovary)"/>
</dbReference>
<dbReference type="neXtProt" id="NX_Q5H9M0"/>
<dbReference type="OpenTargets" id="ENSG00000157502"/>
<dbReference type="PharmGKB" id="PA134880222"/>
<dbReference type="VEuPathDB" id="HostDB:ENSG00000157502"/>
<dbReference type="eggNOG" id="ENOG502QPRU">
    <property type="taxonomic scope" value="Eukaryota"/>
</dbReference>
<dbReference type="GeneTree" id="ENSGT00390000001700"/>
<dbReference type="HOGENOM" id="CLU_388271_0_0_1"/>
<dbReference type="InParanoid" id="Q5H9M0"/>
<dbReference type="OMA" id="KYRKHEG"/>
<dbReference type="OrthoDB" id="10013064at2759"/>
<dbReference type="PAN-GO" id="Q5H9M0">
    <property type="GO annotations" value="0 GO annotations based on evolutionary models"/>
</dbReference>
<dbReference type="PhylomeDB" id="Q5H9M0"/>
<dbReference type="TreeFam" id="TF328774"/>
<dbReference type="PathwayCommons" id="Q5H9M0"/>
<dbReference type="SignaLink" id="Q5H9M0"/>
<dbReference type="BioGRID-ORCS" id="139221">
    <property type="hits" value="13 hits in 771 CRISPR screens"/>
</dbReference>
<dbReference type="ChiTaRS" id="MUM1L1">
    <property type="organism name" value="human"/>
</dbReference>
<dbReference type="GenomeRNAi" id="139221"/>
<dbReference type="Pharos" id="Q5H9M0">
    <property type="development level" value="Tdark"/>
</dbReference>
<dbReference type="PRO" id="PR:Q5H9M0"/>
<dbReference type="Proteomes" id="UP000005640">
    <property type="component" value="Chromosome X"/>
</dbReference>
<dbReference type="RNAct" id="Q5H9M0">
    <property type="molecule type" value="protein"/>
</dbReference>
<dbReference type="Bgee" id="ENSG00000157502">
    <property type="expression patterns" value="Expressed in left ovary and 141 other cell types or tissues"/>
</dbReference>
<dbReference type="GO" id="GO:0070062">
    <property type="term" value="C:extracellular exosome"/>
    <property type="evidence" value="ECO:0007005"/>
    <property type="project" value="UniProtKB"/>
</dbReference>
<dbReference type="CDD" id="cd06080">
    <property type="entry name" value="PWWP_MUM1-like"/>
    <property type="match status" value="1"/>
</dbReference>
<dbReference type="FunFam" id="2.30.30.140:FF:000063">
    <property type="entry name" value="PWWP domain-containing DNA repair factor 3A"/>
    <property type="match status" value="1"/>
</dbReference>
<dbReference type="Gene3D" id="2.30.30.140">
    <property type="match status" value="1"/>
</dbReference>
<dbReference type="Gene3D" id="6.10.300.20">
    <property type="match status" value="1"/>
</dbReference>
<dbReference type="InterPro" id="IPR035504">
    <property type="entry name" value="MUM1-like_PWWP"/>
</dbReference>
<dbReference type="InterPro" id="IPR040263">
    <property type="entry name" value="PWP3A_3B_4"/>
</dbReference>
<dbReference type="InterPro" id="IPR048795">
    <property type="entry name" value="PWP3A_3B_4_C"/>
</dbReference>
<dbReference type="InterPro" id="IPR048765">
    <property type="entry name" value="PWP3A_3B_4_N"/>
</dbReference>
<dbReference type="PANTHER" id="PTHR31333">
    <property type="entry name" value="PWWP DOMAIN-CONTAINING DNA REPAIR FACTOR 3 FAMILY MEMBER"/>
    <property type="match status" value="1"/>
</dbReference>
<dbReference type="PANTHER" id="PTHR31333:SF3">
    <property type="entry name" value="PWWP DOMAIN-CONTAINING DNA REPAIR FACTOR 3B"/>
    <property type="match status" value="1"/>
</dbReference>
<dbReference type="Pfam" id="PF20884">
    <property type="entry name" value="MUM1-like_PWWP"/>
    <property type="match status" value="1"/>
</dbReference>
<dbReference type="Pfam" id="PF20886">
    <property type="entry name" value="PWP3A-B_C"/>
    <property type="match status" value="1"/>
</dbReference>
<dbReference type="Pfam" id="PF20887">
    <property type="entry name" value="PWP3A-B_N"/>
    <property type="match status" value="1"/>
</dbReference>
<dbReference type="SUPFAM" id="SSF63748">
    <property type="entry name" value="Tudor/PWWP/MBT"/>
    <property type="match status" value="1"/>
</dbReference>
<reference key="1">
    <citation type="journal article" date="2004" name="Nat. Genet.">
        <title>Complete sequencing and characterization of 21,243 full-length human cDNAs.</title>
        <authorList>
            <person name="Ota T."/>
            <person name="Suzuki Y."/>
            <person name="Nishikawa T."/>
            <person name="Otsuki T."/>
            <person name="Sugiyama T."/>
            <person name="Irie R."/>
            <person name="Wakamatsu A."/>
            <person name="Hayashi K."/>
            <person name="Sato H."/>
            <person name="Nagai K."/>
            <person name="Kimura K."/>
            <person name="Makita H."/>
            <person name="Sekine M."/>
            <person name="Obayashi M."/>
            <person name="Nishi T."/>
            <person name="Shibahara T."/>
            <person name="Tanaka T."/>
            <person name="Ishii S."/>
            <person name="Yamamoto J."/>
            <person name="Saito K."/>
            <person name="Kawai Y."/>
            <person name="Isono Y."/>
            <person name="Nakamura Y."/>
            <person name="Nagahari K."/>
            <person name="Murakami K."/>
            <person name="Yasuda T."/>
            <person name="Iwayanagi T."/>
            <person name="Wagatsuma M."/>
            <person name="Shiratori A."/>
            <person name="Sudo H."/>
            <person name="Hosoiri T."/>
            <person name="Kaku Y."/>
            <person name="Kodaira H."/>
            <person name="Kondo H."/>
            <person name="Sugawara M."/>
            <person name="Takahashi M."/>
            <person name="Kanda K."/>
            <person name="Yokoi T."/>
            <person name="Furuya T."/>
            <person name="Kikkawa E."/>
            <person name="Omura Y."/>
            <person name="Abe K."/>
            <person name="Kamihara K."/>
            <person name="Katsuta N."/>
            <person name="Sato K."/>
            <person name="Tanikawa M."/>
            <person name="Yamazaki M."/>
            <person name="Ninomiya K."/>
            <person name="Ishibashi T."/>
            <person name="Yamashita H."/>
            <person name="Murakawa K."/>
            <person name="Fujimori K."/>
            <person name="Tanai H."/>
            <person name="Kimata M."/>
            <person name="Watanabe M."/>
            <person name="Hiraoka S."/>
            <person name="Chiba Y."/>
            <person name="Ishida S."/>
            <person name="Ono Y."/>
            <person name="Takiguchi S."/>
            <person name="Watanabe S."/>
            <person name="Yosida M."/>
            <person name="Hotuta T."/>
            <person name="Kusano J."/>
            <person name="Kanehori K."/>
            <person name="Takahashi-Fujii A."/>
            <person name="Hara H."/>
            <person name="Tanase T.-O."/>
            <person name="Nomura Y."/>
            <person name="Togiya S."/>
            <person name="Komai F."/>
            <person name="Hara R."/>
            <person name="Takeuchi K."/>
            <person name="Arita M."/>
            <person name="Imose N."/>
            <person name="Musashino K."/>
            <person name="Yuuki H."/>
            <person name="Oshima A."/>
            <person name="Sasaki N."/>
            <person name="Aotsuka S."/>
            <person name="Yoshikawa Y."/>
            <person name="Matsunawa H."/>
            <person name="Ichihara T."/>
            <person name="Shiohata N."/>
            <person name="Sano S."/>
            <person name="Moriya S."/>
            <person name="Momiyama H."/>
            <person name="Satoh N."/>
            <person name="Takami S."/>
            <person name="Terashima Y."/>
            <person name="Suzuki O."/>
            <person name="Nakagawa S."/>
            <person name="Senoh A."/>
            <person name="Mizoguchi H."/>
            <person name="Goto Y."/>
            <person name="Shimizu F."/>
            <person name="Wakebe H."/>
            <person name="Hishigaki H."/>
            <person name="Watanabe T."/>
            <person name="Sugiyama A."/>
            <person name="Takemoto M."/>
            <person name="Kawakami B."/>
            <person name="Yamazaki M."/>
            <person name="Watanabe K."/>
            <person name="Kumagai A."/>
            <person name="Itakura S."/>
            <person name="Fukuzumi Y."/>
            <person name="Fujimori Y."/>
            <person name="Komiyama M."/>
            <person name="Tashiro H."/>
            <person name="Tanigami A."/>
            <person name="Fujiwara T."/>
            <person name="Ono T."/>
            <person name="Yamada K."/>
            <person name="Fujii Y."/>
            <person name="Ozaki K."/>
            <person name="Hirao M."/>
            <person name="Ohmori Y."/>
            <person name="Kawabata A."/>
            <person name="Hikiji T."/>
            <person name="Kobatake N."/>
            <person name="Inagaki H."/>
            <person name="Ikema Y."/>
            <person name="Okamoto S."/>
            <person name="Okitani R."/>
            <person name="Kawakami T."/>
            <person name="Noguchi S."/>
            <person name="Itoh T."/>
            <person name="Shigeta K."/>
            <person name="Senba T."/>
            <person name="Matsumura K."/>
            <person name="Nakajima Y."/>
            <person name="Mizuno T."/>
            <person name="Morinaga M."/>
            <person name="Sasaki M."/>
            <person name="Togashi T."/>
            <person name="Oyama M."/>
            <person name="Hata H."/>
            <person name="Watanabe M."/>
            <person name="Komatsu T."/>
            <person name="Mizushima-Sugano J."/>
            <person name="Satoh T."/>
            <person name="Shirai Y."/>
            <person name="Takahashi Y."/>
            <person name="Nakagawa K."/>
            <person name="Okumura K."/>
            <person name="Nagase T."/>
            <person name="Nomura N."/>
            <person name="Kikuchi H."/>
            <person name="Masuho Y."/>
            <person name="Yamashita R."/>
            <person name="Nakai K."/>
            <person name="Yada T."/>
            <person name="Nakamura Y."/>
            <person name="Ohara O."/>
            <person name="Isogai T."/>
            <person name="Sugano S."/>
        </authorList>
    </citation>
    <scope>NUCLEOTIDE SEQUENCE [LARGE SCALE MRNA]</scope>
    <source>
        <tissue>Amygdala</tissue>
    </source>
</reference>
<reference key="2">
    <citation type="journal article" date="2005" name="Nature">
        <title>The DNA sequence of the human X chromosome.</title>
        <authorList>
            <person name="Ross M.T."/>
            <person name="Grafham D.V."/>
            <person name="Coffey A.J."/>
            <person name="Scherer S."/>
            <person name="McLay K."/>
            <person name="Muzny D."/>
            <person name="Platzer M."/>
            <person name="Howell G.R."/>
            <person name="Burrows C."/>
            <person name="Bird C.P."/>
            <person name="Frankish A."/>
            <person name="Lovell F.L."/>
            <person name="Howe K.L."/>
            <person name="Ashurst J.L."/>
            <person name="Fulton R.S."/>
            <person name="Sudbrak R."/>
            <person name="Wen G."/>
            <person name="Jones M.C."/>
            <person name="Hurles M.E."/>
            <person name="Andrews T.D."/>
            <person name="Scott C.E."/>
            <person name="Searle S."/>
            <person name="Ramser J."/>
            <person name="Whittaker A."/>
            <person name="Deadman R."/>
            <person name="Carter N.P."/>
            <person name="Hunt S.E."/>
            <person name="Chen R."/>
            <person name="Cree A."/>
            <person name="Gunaratne P."/>
            <person name="Havlak P."/>
            <person name="Hodgson A."/>
            <person name="Metzker M.L."/>
            <person name="Richards S."/>
            <person name="Scott G."/>
            <person name="Steffen D."/>
            <person name="Sodergren E."/>
            <person name="Wheeler D.A."/>
            <person name="Worley K.C."/>
            <person name="Ainscough R."/>
            <person name="Ambrose K.D."/>
            <person name="Ansari-Lari M.A."/>
            <person name="Aradhya S."/>
            <person name="Ashwell R.I."/>
            <person name="Babbage A.K."/>
            <person name="Bagguley C.L."/>
            <person name="Ballabio A."/>
            <person name="Banerjee R."/>
            <person name="Barker G.E."/>
            <person name="Barlow K.F."/>
            <person name="Barrett I.P."/>
            <person name="Bates K.N."/>
            <person name="Beare D.M."/>
            <person name="Beasley H."/>
            <person name="Beasley O."/>
            <person name="Beck A."/>
            <person name="Bethel G."/>
            <person name="Blechschmidt K."/>
            <person name="Brady N."/>
            <person name="Bray-Allen S."/>
            <person name="Bridgeman A.M."/>
            <person name="Brown A.J."/>
            <person name="Brown M.J."/>
            <person name="Bonnin D."/>
            <person name="Bruford E.A."/>
            <person name="Buhay C."/>
            <person name="Burch P."/>
            <person name="Burford D."/>
            <person name="Burgess J."/>
            <person name="Burrill W."/>
            <person name="Burton J."/>
            <person name="Bye J.M."/>
            <person name="Carder C."/>
            <person name="Carrel L."/>
            <person name="Chako J."/>
            <person name="Chapman J.C."/>
            <person name="Chavez D."/>
            <person name="Chen E."/>
            <person name="Chen G."/>
            <person name="Chen Y."/>
            <person name="Chen Z."/>
            <person name="Chinault C."/>
            <person name="Ciccodicola A."/>
            <person name="Clark S.Y."/>
            <person name="Clarke G."/>
            <person name="Clee C.M."/>
            <person name="Clegg S."/>
            <person name="Clerc-Blankenburg K."/>
            <person name="Clifford K."/>
            <person name="Cobley V."/>
            <person name="Cole C.G."/>
            <person name="Conquer J.S."/>
            <person name="Corby N."/>
            <person name="Connor R.E."/>
            <person name="David R."/>
            <person name="Davies J."/>
            <person name="Davis C."/>
            <person name="Davis J."/>
            <person name="Delgado O."/>
            <person name="Deshazo D."/>
            <person name="Dhami P."/>
            <person name="Ding Y."/>
            <person name="Dinh H."/>
            <person name="Dodsworth S."/>
            <person name="Draper H."/>
            <person name="Dugan-Rocha S."/>
            <person name="Dunham A."/>
            <person name="Dunn M."/>
            <person name="Durbin K.J."/>
            <person name="Dutta I."/>
            <person name="Eades T."/>
            <person name="Ellwood M."/>
            <person name="Emery-Cohen A."/>
            <person name="Errington H."/>
            <person name="Evans K.L."/>
            <person name="Faulkner L."/>
            <person name="Francis F."/>
            <person name="Frankland J."/>
            <person name="Fraser A.E."/>
            <person name="Galgoczy P."/>
            <person name="Gilbert J."/>
            <person name="Gill R."/>
            <person name="Gloeckner G."/>
            <person name="Gregory S.G."/>
            <person name="Gribble S."/>
            <person name="Griffiths C."/>
            <person name="Grocock R."/>
            <person name="Gu Y."/>
            <person name="Gwilliam R."/>
            <person name="Hamilton C."/>
            <person name="Hart E.A."/>
            <person name="Hawes A."/>
            <person name="Heath P.D."/>
            <person name="Heitmann K."/>
            <person name="Hennig S."/>
            <person name="Hernandez J."/>
            <person name="Hinzmann B."/>
            <person name="Ho S."/>
            <person name="Hoffs M."/>
            <person name="Howden P.J."/>
            <person name="Huckle E.J."/>
            <person name="Hume J."/>
            <person name="Hunt P.J."/>
            <person name="Hunt A.R."/>
            <person name="Isherwood J."/>
            <person name="Jacob L."/>
            <person name="Johnson D."/>
            <person name="Jones S."/>
            <person name="de Jong P.J."/>
            <person name="Joseph S.S."/>
            <person name="Keenan S."/>
            <person name="Kelly S."/>
            <person name="Kershaw J.K."/>
            <person name="Khan Z."/>
            <person name="Kioschis P."/>
            <person name="Klages S."/>
            <person name="Knights A.J."/>
            <person name="Kosiura A."/>
            <person name="Kovar-Smith C."/>
            <person name="Laird G.K."/>
            <person name="Langford C."/>
            <person name="Lawlor S."/>
            <person name="Leversha M."/>
            <person name="Lewis L."/>
            <person name="Liu W."/>
            <person name="Lloyd C."/>
            <person name="Lloyd D.M."/>
            <person name="Loulseged H."/>
            <person name="Loveland J.E."/>
            <person name="Lovell J.D."/>
            <person name="Lozado R."/>
            <person name="Lu J."/>
            <person name="Lyne R."/>
            <person name="Ma J."/>
            <person name="Maheshwari M."/>
            <person name="Matthews L.H."/>
            <person name="McDowall J."/>
            <person name="McLaren S."/>
            <person name="McMurray A."/>
            <person name="Meidl P."/>
            <person name="Meitinger T."/>
            <person name="Milne S."/>
            <person name="Miner G."/>
            <person name="Mistry S.L."/>
            <person name="Morgan M."/>
            <person name="Morris S."/>
            <person name="Mueller I."/>
            <person name="Mullikin J.C."/>
            <person name="Nguyen N."/>
            <person name="Nordsiek G."/>
            <person name="Nyakatura G."/>
            <person name="O'dell C.N."/>
            <person name="Okwuonu G."/>
            <person name="Palmer S."/>
            <person name="Pandian R."/>
            <person name="Parker D."/>
            <person name="Parrish J."/>
            <person name="Pasternak S."/>
            <person name="Patel D."/>
            <person name="Pearce A.V."/>
            <person name="Pearson D.M."/>
            <person name="Pelan S.E."/>
            <person name="Perez L."/>
            <person name="Porter K.M."/>
            <person name="Ramsey Y."/>
            <person name="Reichwald K."/>
            <person name="Rhodes S."/>
            <person name="Ridler K.A."/>
            <person name="Schlessinger D."/>
            <person name="Schueler M.G."/>
            <person name="Sehra H.K."/>
            <person name="Shaw-Smith C."/>
            <person name="Shen H."/>
            <person name="Sheridan E.M."/>
            <person name="Shownkeen R."/>
            <person name="Skuce C.D."/>
            <person name="Smith M.L."/>
            <person name="Sotheran E.C."/>
            <person name="Steingruber H.E."/>
            <person name="Steward C.A."/>
            <person name="Storey R."/>
            <person name="Swann R.M."/>
            <person name="Swarbreck D."/>
            <person name="Tabor P.E."/>
            <person name="Taudien S."/>
            <person name="Taylor T."/>
            <person name="Teague B."/>
            <person name="Thomas K."/>
            <person name="Thorpe A."/>
            <person name="Timms K."/>
            <person name="Tracey A."/>
            <person name="Trevanion S."/>
            <person name="Tromans A.C."/>
            <person name="d'Urso M."/>
            <person name="Verduzco D."/>
            <person name="Villasana D."/>
            <person name="Waldron L."/>
            <person name="Wall M."/>
            <person name="Wang Q."/>
            <person name="Warren J."/>
            <person name="Warry G.L."/>
            <person name="Wei X."/>
            <person name="West A."/>
            <person name="Whitehead S.L."/>
            <person name="Whiteley M.N."/>
            <person name="Wilkinson J.E."/>
            <person name="Willey D.L."/>
            <person name="Williams G."/>
            <person name="Williams L."/>
            <person name="Williamson A."/>
            <person name="Williamson H."/>
            <person name="Wilming L."/>
            <person name="Woodmansey R.L."/>
            <person name="Wray P.W."/>
            <person name="Yen J."/>
            <person name="Zhang J."/>
            <person name="Zhou J."/>
            <person name="Zoghbi H."/>
            <person name="Zorilla S."/>
            <person name="Buck D."/>
            <person name="Reinhardt R."/>
            <person name="Poustka A."/>
            <person name="Rosenthal A."/>
            <person name="Lehrach H."/>
            <person name="Meindl A."/>
            <person name="Minx P.J."/>
            <person name="Hillier L.W."/>
            <person name="Willard H.F."/>
            <person name="Wilson R.K."/>
            <person name="Waterston R.H."/>
            <person name="Rice C.M."/>
            <person name="Vaudin M."/>
            <person name="Coulson A."/>
            <person name="Nelson D.L."/>
            <person name="Weinstock G."/>
            <person name="Sulston J.E."/>
            <person name="Durbin R.M."/>
            <person name="Hubbard T."/>
            <person name="Gibbs R.A."/>
            <person name="Beck S."/>
            <person name="Rogers J."/>
            <person name="Bentley D.R."/>
        </authorList>
    </citation>
    <scope>NUCLEOTIDE SEQUENCE [LARGE SCALE GENOMIC DNA]</scope>
</reference>
<reference key="3">
    <citation type="submission" date="2005-09" db="EMBL/GenBank/DDBJ databases">
        <authorList>
            <person name="Mural R.J."/>
            <person name="Istrail S."/>
            <person name="Sutton G.G."/>
            <person name="Florea L."/>
            <person name="Halpern A.L."/>
            <person name="Mobarry C.M."/>
            <person name="Lippert R."/>
            <person name="Walenz B."/>
            <person name="Shatkay H."/>
            <person name="Dew I."/>
            <person name="Miller J.R."/>
            <person name="Flanigan M.J."/>
            <person name="Edwards N.J."/>
            <person name="Bolanos R."/>
            <person name="Fasulo D."/>
            <person name="Halldorsson B.V."/>
            <person name="Hannenhalli S."/>
            <person name="Turner R."/>
            <person name="Yooseph S."/>
            <person name="Lu F."/>
            <person name="Nusskern D.R."/>
            <person name="Shue B.C."/>
            <person name="Zheng X.H."/>
            <person name="Zhong F."/>
            <person name="Delcher A.L."/>
            <person name="Huson D.H."/>
            <person name="Kravitz S.A."/>
            <person name="Mouchard L."/>
            <person name="Reinert K."/>
            <person name="Remington K.A."/>
            <person name="Clark A.G."/>
            <person name="Waterman M.S."/>
            <person name="Eichler E.E."/>
            <person name="Adams M.D."/>
            <person name="Hunkapiller M.W."/>
            <person name="Myers E.W."/>
            <person name="Venter J.C."/>
        </authorList>
    </citation>
    <scope>NUCLEOTIDE SEQUENCE [LARGE SCALE GENOMIC DNA]</scope>
</reference>
<reference key="4">
    <citation type="journal article" date="2004" name="Genome Res.">
        <title>The status, quality, and expansion of the NIH full-length cDNA project: the Mammalian Gene Collection (MGC).</title>
        <authorList>
            <consortium name="The MGC Project Team"/>
        </authorList>
    </citation>
    <scope>NUCLEOTIDE SEQUENCE [LARGE SCALE MRNA]</scope>
    <source>
        <tissue>Testis</tissue>
    </source>
</reference>